<reference key="1">
    <citation type="submission" date="2007-10" db="EMBL/GenBank/DDBJ databases">
        <authorList>
            <person name="Fan Z."/>
            <person name="Liu Y."/>
            <person name="Liu M."/>
            <person name="Ding F."/>
            <person name="Zhou Y."/>
            <person name="Gu X."/>
        </authorList>
    </citation>
    <scope>NUCLEOTIDE SEQUENCE [MRNA]</scope>
</reference>
<keyword id="KW-0165">Cleavage on pair of basic residues</keyword>
<keyword id="KW-0217">Developmental protein</keyword>
<keyword id="KW-1015">Disulfide bond</keyword>
<keyword id="KW-0325">Glycoprotein</keyword>
<keyword id="KW-0339">Growth factor</keyword>
<keyword id="KW-0497">Mitogen</keyword>
<keyword id="KW-0964">Secreted</keyword>
<keyword id="KW-0732">Signal</keyword>
<comment type="function">
    <text evidence="1">Growth factor that plays an essential role in the regulation of embryonic development, cell proliferation, cell migration, survival and chemotaxis. Potent mitogen and chemoattractant for cells of mesenchymal origin. Required for normal skeleton formation during embryonic development. Required for normal skin morphogenesis during embryonic development. Plays an important role in wound healing, in angiogenesis and blood vessel development (By similarity).</text>
</comment>
<comment type="subunit">
    <text evidence="1">Homodimer; disulfide-linked. Interacts with PDGFRA homodimers, and with heterodimers formed by PDGFRA and PDGFRB (By similarity).</text>
</comment>
<comment type="subcellular location">
    <subcellularLocation>
        <location evidence="1">Secreted</location>
    </subcellularLocation>
</comment>
<comment type="PTM">
    <text evidence="1">Proteolytic removal of the N-terminal CUB domain releasing the core domain is necessary for unmasking the receptor-binding epitopes of the core domain. Cleavage after basic residues in the hinge region (region connecting the CUB and growth factor domains) gives rise to the receptor-binding form (By similarity).</text>
</comment>
<comment type="similarity">
    <text evidence="4">Belongs to the PDGF/VEGF growth factor family.</text>
</comment>
<feature type="signal peptide" evidence="2">
    <location>
        <begin position="1"/>
        <end position="22"/>
    </location>
</feature>
<feature type="chain" id="PRO_0000343879" description="Platelet-derived growth factor C, latent form">
    <location>
        <begin position="23"/>
        <end position="345"/>
    </location>
</feature>
<feature type="chain" id="PRO_0000343880" description="Platelet-derived growth factor C, receptor-binding form">
    <location>
        <begin status="unknown"/>
        <end position="345"/>
    </location>
</feature>
<feature type="domain" description="CUB" evidence="3">
    <location>
        <begin position="46"/>
        <end position="163"/>
    </location>
</feature>
<feature type="site" description="Cleavage" evidence="2">
    <location>
        <begin position="225"/>
        <end position="226"/>
    </location>
</feature>
<feature type="site" description="Cleavage" evidence="2">
    <location>
        <begin position="231"/>
        <end position="232"/>
    </location>
</feature>
<feature type="site" description="Cleavage" evidence="2">
    <location>
        <begin position="234"/>
        <end position="235"/>
    </location>
</feature>
<feature type="glycosylation site" description="N-linked (GlcNAc...) asparagine" evidence="2">
    <location>
        <position position="25"/>
    </location>
</feature>
<feature type="glycosylation site" description="N-linked (GlcNAc...) asparagine" evidence="2">
    <location>
        <position position="55"/>
    </location>
</feature>
<feature type="disulfide bond" evidence="3">
    <location>
        <begin position="104"/>
        <end position="124"/>
    </location>
</feature>
<feature type="disulfide bond" evidence="3">
    <location>
        <begin position="250"/>
        <end position="294"/>
    </location>
</feature>
<feature type="disulfide bond" description="Interchain (with C-286)" evidence="3">
    <location>
        <position position="274"/>
    </location>
</feature>
<feature type="disulfide bond" evidence="3">
    <location>
        <begin position="280"/>
        <end position="335"/>
    </location>
</feature>
<feature type="disulfide bond" description="Interchain (with C-274)" evidence="3">
    <location>
        <position position="286"/>
    </location>
</feature>
<feature type="disulfide bond" evidence="3">
    <location>
        <begin position="287"/>
        <end position="337"/>
    </location>
</feature>
<organism>
    <name type="scientific">Gekko japonicus</name>
    <name type="common">Schlegel's Japanese gecko</name>
    <dbReference type="NCBI Taxonomy" id="146911"/>
    <lineage>
        <taxon>Eukaryota</taxon>
        <taxon>Metazoa</taxon>
        <taxon>Chordata</taxon>
        <taxon>Craniata</taxon>
        <taxon>Vertebrata</taxon>
        <taxon>Euteleostomi</taxon>
        <taxon>Lepidosauria</taxon>
        <taxon>Squamata</taxon>
        <taxon>Bifurcata</taxon>
        <taxon>Gekkota</taxon>
        <taxon>Gekkonidae</taxon>
        <taxon>Gekkoninae</taxon>
        <taxon>Gekko</taxon>
    </lineage>
</organism>
<dbReference type="EMBL" id="EU219970">
    <property type="protein sequence ID" value="ABW95041.1"/>
    <property type="molecule type" value="mRNA"/>
</dbReference>
<dbReference type="RefSeq" id="NP_001310426.1">
    <property type="nucleotide sequence ID" value="NM_001323497.1"/>
</dbReference>
<dbReference type="RefSeq" id="XP_015285271.1">
    <property type="nucleotide sequence ID" value="XM_015429785.1"/>
</dbReference>
<dbReference type="SMR" id="A8WCC4"/>
<dbReference type="GlyCosmos" id="A8WCC4">
    <property type="glycosylation" value="2 sites, No reported glycans"/>
</dbReference>
<dbReference type="GeneID" id="107126248"/>
<dbReference type="KEGG" id="gja:107126248"/>
<dbReference type="CTD" id="56034"/>
<dbReference type="OrthoDB" id="8641091at2759"/>
<dbReference type="Proteomes" id="UP000694871">
    <property type="component" value="Unplaced"/>
</dbReference>
<dbReference type="GO" id="GO:0005615">
    <property type="term" value="C:extracellular space"/>
    <property type="evidence" value="ECO:0007669"/>
    <property type="project" value="TreeGrafter"/>
</dbReference>
<dbReference type="GO" id="GO:0016020">
    <property type="term" value="C:membrane"/>
    <property type="evidence" value="ECO:0007669"/>
    <property type="project" value="InterPro"/>
</dbReference>
<dbReference type="GO" id="GO:0008083">
    <property type="term" value="F:growth factor activity"/>
    <property type="evidence" value="ECO:0007669"/>
    <property type="project" value="UniProtKB-KW"/>
</dbReference>
<dbReference type="GO" id="GO:0005161">
    <property type="term" value="F:platelet-derived growth factor receptor binding"/>
    <property type="evidence" value="ECO:0007669"/>
    <property type="project" value="TreeGrafter"/>
</dbReference>
<dbReference type="GO" id="GO:0048008">
    <property type="term" value="P:platelet-derived growth factor receptor signaling pathway"/>
    <property type="evidence" value="ECO:0007669"/>
    <property type="project" value="TreeGrafter"/>
</dbReference>
<dbReference type="GO" id="GO:0051781">
    <property type="term" value="P:positive regulation of cell division"/>
    <property type="evidence" value="ECO:0007669"/>
    <property type="project" value="UniProtKB-KW"/>
</dbReference>
<dbReference type="GO" id="GO:0030335">
    <property type="term" value="P:positive regulation of cell migration"/>
    <property type="evidence" value="ECO:0007669"/>
    <property type="project" value="TreeGrafter"/>
</dbReference>
<dbReference type="GO" id="GO:0008284">
    <property type="term" value="P:positive regulation of cell population proliferation"/>
    <property type="evidence" value="ECO:0007669"/>
    <property type="project" value="TreeGrafter"/>
</dbReference>
<dbReference type="GO" id="GO:0070374">
    <property type="term" value="P:positive regulation of ERK1 and ERK2 cascade"/>
    <property type="evidence" value="ECO:0007669"/>
    <property type="project" value="TreeGrafter"/>
</dbReference>
<dbReference type="GO" id="GO:0051897">
    <property type="term" value="P:positive regulation of phosphatidylinositol 3-kinase/protein kinase B signal transduction"/>
    <property type="evidence" value="ECO:0007669"/>
    <property type="project" value="TreeGrafter"/>
</dbReference>
<dbReference type="CDD" id="cd00041">
    <property type="entry name" value="CUB"/>
    <property type="match status" value="1"/>
</dbReference>
<dbReference type="CDD" id="cd00135">
    <property type="entry name" value="PDGF"/>
    <property type="match status" value="1"/>
</dbReference>
<dbReference type="FunFam" id="2.10.90.10:FF:000010">
    <property type="entry name" value="Platelet derived growth factor C"/>
    <property type="match status" value="1"/>
</dbReference>
<dbReference type="FunFam" id="2.60.120.290:FF:000017">
    <property type="entry name" value="Platelet derived growth factor C"/>
    <property type="match status" value="1"/>
</dbReference>
<dbReference type="Gene3D" id="2.10.90.10">
    <property type="entry name" value="Cystine-knot cytokines"/>
    <property type="match status" value="1"/>
</dbReference>
<dbReference type="Gene3D" id="2.60.120.290">
    <property type="entry name" value="Spermadhesin, CUB domain"/>
    <property type="match status" value="1"/>
</dbReference>
<dbReference type="InterPro" id="IPR000859">
    <property type="entry name" value="CUB_dom"/>
</dbReference>
<dbReference type="InterPro" id="IPR029034">
    <property type="entry name" value="Cystine-knot_cytokine"/>
</dbReference>
<dbReference type="InterPro" id="IPR000072">
    <property type="entry name" value="PDGF/VEGF_dom"/>
</dbReference>
<dbReference type="InterPro" id="IPR035914">
    <property type="entry name" value="Sperma_CUB_dom_sf"/>
</dbReference>
<dbReference type="PANTHER" id="PTHR11633">
    <property type="entry name" value="PLATELET-DERIVED GROWTH FACTOR"/>
    <property type="match status" value="1"/>
</dbReference>
<dbReference type="PANTHER" id="PTHR11633:SF5">
    <property type="entry name" value="PLATELET-DERIVED GROWTH FACTOR C"/>
    <property type="match status" value="1"/>
</dbReference>
<dbReference type="Pfam" id="PF00431">
    <property type="entry name" value="CUB"/>
    <property type="match status" value="1"/>
</dbReference>
<dbReference type="Pfam" id="PF00341">
    <property type="entry name" value="PDGF"/>
    <property type="match status" value="1"/>
</dbReference>
<dbReference type="SMART" id="SM00042">
    <property type="entry name" value="CUB"/>
    <property type="match status" value="1"/>
</dbReference>
<dbReference type="SUPFAM" id="SSF57501">
    <property type="entry name" value="Cystine-knot cytokines"/>
    <property type="match status" value="1"/>
</dbReference>
<dbReference type="SUPFAM" id="SSF49854">
    <property type="entry name" value="Spermadhesin, CUB domain"/>
    <property type="match status" value="1"/>
</dbReference>
<dbReference type="PROSITE" id="PS01180">
    <property type="entry name" value="CUB"/>
    <property type="match status" value="1"/>
</dbReference>
<dbReference type="PROSITE" id="PS50278">
    <property type="entry name" value="PDGF_2"/>
    <property type="match status" value="1"/>
</dbReference>
<accession>A8WCC4</accession>
<name>PDGFC_GEKJA</name>
<sequence length="345" mass="39065">MLLFGFLLLTFALVSQRQGAEAESNLSSKFQFSSAKEQNGVQEPQHEKIITVSANGSIHSPKFPYTYPRNTVLVWRLVAIEENVLIQLTFDERFGLEDPEDDICKYDFVEVEEPSDGSILGRWCGSTAVPGKQISKGNQIRIRFVSDEYFPSEPGFCIHYTLLTPHQTESASPTVLPPSAFSLDLLNNAVAGFSTVEELIRYLEPDRWQLDLEDLYKPAWQLLGKAYIHGRKSRVVDLNLLKEEVRMYSCTPRNFSVSLREELKRTDTIFWPLCLLVKRCGGNCACCQHSCSECQCIPTKVTKKYHEVLQLKPRSGVRGLHKSLTDVPLEHHEECECVCKGNAEG</sequence>
<gene>
    <name type="primary">PDGFC</name>
</gene>
<evidence type="ECO:0000250" key="1"/>
<evidence type="ECO:0000255" key="2"/>
<evidence type="ECO:0000255" key="3">
    <source>
        <dbReference type="PROSITE-ProRule" id="PRU00059"/>
    </source>
</evidence>
<evidence type="ECO:0000305" key="4"/>
<protein>
    <recommendedName>
        <fullName>Platelet-derived growth factor C</fullName>
        <shortName>PDGF-C</shortName>
    </recommendedName>
    <component>
        <recommendedName>
            <fullName>Platelet-derived growth factor C, latent form</fullName>
            <shortName>PDGFC latent form</shortName>
        </recommendedName>
    </component>
    <component>
        <recommendedName>
            <fullName>Platelet-derived growth factor C, receptor-binding form</fullName>
            <shortName>PDGFC receptor-binding form</shortName>
        </recommendedName>
    </component>
</protein>
<proteinExistence type="evidence at transcript level"/>